<accession>A8MLG8</accession>
<reference key="1">
    <citation type="submission" date="2007-10" db="EMBL/GenBank/DDBJ databases">
        <title>Complete genome of Alkaliphilus oremlandii OhILAs.</title>
        <authorList>
            <person name="Copeland A."/>
            <person name="Lucas S."/>
            <person name="Lapidus A."/>
            <person name="Barry K."/>
            <person name="Detter J.C."/>
            <person name="Glavina del Rio T."/>
            <person name="Hammon N."/>
            <person name="Israni S."/>
            <person name="Dalin E."/>
            <person name="Tice H."/>
            <person name="Pitluck S."/>
            <person name="Chain P."/>
            <person name="Malfatti S."/>
            <person name="Shin M."/>
            <person name="Vergez L."/>
            <person name="Schmutz J."/>
            <person name="Larimer F."/>
            <person name="Land M."/>
            <person name="Hauser L."/>
            <person name="Kyrpides N."/>
            <person name="Mikhailova N."/>
            <person name="Stolz J.F."/>
            <person name="Dawson A."/>
            <person name="Fisher E."/>
            <person name="Crable B."/>
            <person name="Perera E."/>
            <person name="Lisak J."/>
            <person name="Ranganathan M."/>
            <person name="Basu P."/>
            <person name="Richardson P."/>
        </authorList>
    </citation>
    <scope>NUCLEOTIDE SEQUENCE [LARGE SCALE GENOMIC DNA]</scope>
    <source>
        <strain>OhILAs</strain>
    </source>
</reference>
<comment type="function">
    <text evidence="1">One of the primary rRNA binding proteins, it binds directly to 16S rRNA where it nucleates assembly of the body of the 30S subunit.</text>
</comment>
<comment type="function">
    <text evidence="1">With S5 and S12 plays an important role in translational accuracy.</text>
</comment>
<comment type="subunit">
    <text evidence="1">Part of the 30S ribosomal subunit. Contacts protein S5. The interaction surface between S4 and S5 is involved in control of translational fidelity.</text>
</comment>
<comment type="similarity">
    <text evidence="1">Belongs to the universal ribosomal protein uS4 family.</text>
</comment>
<evidence type="ECO:0000255" key="1">
    <source>
        <dbReference type="HAMAP-Rule" id="MF_01306"/>
    </source>
</evidence>
<evidence type="ECO:0000305" key="2"/>
<feature type="chain" id="PRO_0000322263" description="Small ribosomal subunit protein uS4A">
    <location>
        <begin position="1"/>
        <end position="207"/>
    </location>
</feature>
<feature type="domain" description="S4 RNA-binding" evidence="1">
    <location>
        <begin position="98"/>
        <end position="158"/>
    </location>
</feature>
<sequence length="207" mass="23327">MARYTEAVCRLCRREGMKLYLKGDRCYTDKCAISKRTYAPGQHGQSRKKLSNYGLQLREKQKAKRFYGVLESQFRKYFEIADKQAGITGENLLRLLETRLDNVAYRLGFGSSRAEARQLVVHGHFTVNGKKVDIPSYLVSAGDTIAVAEKSKSSAKFKALAENAKGNTPNWLTVDVEKLEGKVVALPSREDIDLEIAENLIVELYSK</sequence>
<organism>
    <name type="scientific">Alkaliphilus oremlandii (strain OhILAs)</name>
    <name type="common">Clostridium oremlandii (strain OhILAs)</name>
    <dbReference type="NCBI Taxonomy" id="350688"/>
    <lineage>
        <taxon>Bacteria</taxon>
        <taxon>Bacillati</taxon>
        <taxon>Bacillota</taxon>
        <taxon>Clostridia</taxon>
        <taxon>Peptostreptococcales</taxon>
        <taxon>Natronincolaceae</taxon>
        <taxon>Alkaliphilus</taxon>
    </lineage>
</organism>
<protein>
    <recommendedName>
        <fullName evidence="1">Small ribosomal subunit protein uS4A</fullName>
    </recommendedName>
    <alternativeName>
        <fullName evidence="2">30S ribosomal protein S4 1</fullName>
    </alternativeName>
</protein>
<name>RS4A_ALKOO</name>
<dbReference type="EMBL" id="CP000853">
    <property type="protein sequence ID" value="ABW18082.1"/>
    <property type="molecule type" value="Genomic_DNA"/>
</dbReference>
<dbReference type="RefSeq" id="WP_012158396.1">
    <property type="nucleotide sequence ID" value="NC_009922.1"/>
</dbReference>
<dbReference type="SMR" id="A8MLG8"/>
<dbReference type="STRING" id="350688.Clos_0520"/>
<dbReference type="KEGG" id="aoe:Clos_0520"/>
<dbReference type="eggNOG" id="COG0522">
    <property type="taxonomic scope" value="Bacteria"/>
</dbReference>
<dbReference type="HOGENOM" id="CLU_092403_0_2_9"/>
<dbReference type="OrthoDB" id="9803672at2"/>
<dbReference type="Proteomes" id="UP000000269">
    <property type="component" value="Chromosome"/>
</dbReference>
<dbReference type="GO" id="GO:0015935">
    <property type="term" value="C:small ribosomal subunit"/>
    <property type="evidence" value="ECO:0007669"/>
    <property type="project" value="InterPro"/>
</dbReference>
<dbReference type="GO" id="GO:0019843">
    <property type="term" value="F:rRNA binding"/>
    <property type="evidence" value="ECO:0007669"/>
    <property type="project" value="UniProtKB-UniRule"/>
</dbReference>
<dbReference type="GO" id="GO:0003735">
    <property type="term" value="F:structural constituent of ribosome"/>
    <property type="evidence" value="ECO:0007669"/>
    <property type="project" value="InterPro"/>
</dbReference>
<dbReference type="GO" id="GO:0042274">
    <property type="term" value="P:ribosomal small subunit biogenesis"/>
    <property type="evidence" value="ECO:0007669"/>
    <property type="project" value="TreeGrafter"/>
</dbReference>
<dbReference type="GO" id="GO:0006412">
    <property type="term" value="P:translation"/>
    <property type="evidence" value="ECO:0007669"/>
    <property type="project" value="UniProtKB-UniRule"/>
</dbReference>
<dbReference type="CDD" id="cd00165">
    <property type="entry name" value="S4"/>
    <property type="match status" value="1"/>
</dbReference>
<dbReference type="FunFam" id="1.10.1050.10:FF:000001">
    <property type="entry name" value="30S ribosomal protein S4"/>
    <property type="match status" value="1"/>
</dbReference>
<dbReference type="FunFam" id="3.10.290.10:FF:000001">
    <property type="entry name" value="30S ribosomal protein S4"/>
    <property type="match status" value="1"/>
</dbReference>
<dbReference type="Gene3D" id="1.10.1050.10">
    <property type="entry name" value="Ribosomal Protein S4 Delta 41, Chain A, domain 1"/>
    <property type="match status" value="1"/>
</dbReference>
<dbReference type="Gene3D" id="3.10.290.10">
    <property type="entry name" value="RNA-binding S4 domain"/>
    <property type="match status" value="1"/>
</dbReference>
<dbReference type="HAMAP" id="MF_01306_B">
    <property type="entry name" value="Ribosomal_uS4_B"/>
    <property type="match status" value="1"/>
</dbReference>
<dbReference type="InterPro" id="IPR022801">
    <property type="entry name" value="Ribosomal_uS4"/>
</dbReference>
<dbReference type="InterPro" id="IPR005709">
    <property type="entry name" value="Ribosomal_uS4_bac-type"/>
</dbReference>
<dbReference type="InterPro" id="IPR001912">
    <property type="entry name" value="Ribosomal_uS4_N"/>
</dbReference>
<dbReference type="InterPro" id="IPR002942">
    <property type="entry name" value="S4_RNA-bd"/>
</dbReference>
<dbReference type="InterPro" id="IPR036986">
    <property type="entry name" value="S4_RNA-bd_sf"/>
</dbReference>
<dbReference type="NCBIfam" id="NF003717">
    <property type="entry name" value="PRK05327.1"/>
    <property type="match status" value="1"/>
</dbReference>
<dbReference type="NCBIfam" id="TIGR01017">
    <property type="entry name" value="rpsD_bact"/>
    <property type="match status" value="1"/>
</dbReference>
<dbReference type="PANTHER" id="PTHR11831">
    <property type="entry name" value="30S 40S RIBOSOMAL PROTEIN"/>
    <property type="match status" value="1"/>
</dbReference>
<dbReference type="PANTHER" id="PTHR11831:SF4">
    <property type="entry name" value="SMALL RIBOSOMAL SUBUNIT PROTEIN US4M"/>
    <property type="match status" value="1"/>
</dbReference>
<dbReference type="Pfam" id="PF00163">
    <property type="entry name" value="Ribosomal_S4"/>
    <property type="match status" value="1"/>
</dbReference>
<dbReference type="Pfam" id="PF01479">
    <property type="entry name" value="S4"/>
    <property type="match status" value="1"/>
</dbReference>
<dbReference type="SMART" id="SM01390">
    <property type="entry name" value="Ribosomal_S4"/>
    <property type="match status" value="1"/>
</dbReference>
<dbReference type="SMART" id="SM00363">
    <property type="entry name" value="S4"/>
    <property type="match status" value="1"/>
</dbReference>
<dbReference type="SUPFAM" id="SSF55174">
    <property type="entry name" value="Alpha-L RNA-binding motif"/>
    <property type="match status" value="1"/>
</dbReference>
<dbReference type="PROSITE" id="PS50889">
    <property type="entry name" value="S4"/>
    <property type="match status" value="1"/>
</dbReference>
<keyword id="KW-1185">Reference proteome</keyword>
<keyword id="KW-0687">Ribonucleoprotein</keyword>
<keyword id="KW-0689">Ribosomal protein</keyword>
<keyword id="KW-0694">RNA-binding</keyword>
<keyword id="KW-0699">rRNA-binding</keyword>
<gene>
    <name evidence="1" type="primary">rpsD1</name>
    <name type="ordered locus">Clos_0520</name>
</gene>
<proteinExistence type="inferred from homology"/>